<evidence type="ECO:0000250" key="1"/>
<evidence type="ECO:0000250" key="2">
    <source>
        <dbReference type="UniProtKB" id="P35822"/>
    </source>
</evidence>
<evidence type="ECO:0000255" key="3"/>
<evidence type="ECO:0000255" key="4">
    <source>
        <dbReference type="PROSITE-ProRule" id="PRU00114"/>
    </source>
</evidence>
<evidence type="ECO:0000255" key="5">
    <source>
        <dbReference type="PROSITE-ProRule" id="PRU00128"/>
    </source>
</evidence>
<evidence type="ECO:0000255" key="6">
    <source>
        <dbReference type="PROSITE-ProRule" id="PRU00160"/>
    </source>
</evidence>
<evidence type="ECO:0000255" key="7">
    <source>
        <dbReference type="PROSITE-ProRule" id="PRU00316"/>
    </source>
</evidence>
<evidence type="ECO:0000255" key="8">
    <source>
        <dbReference type="PROSITE-ProRule" id="PRU10044"/>
    </source>
</evidence>
<evidence type="ECO:0000269" key="9">
    <source>
    </source>
</evidence>
<evidence type="ECO:0000269" key="10">
    <source>
    </source>
</evidence>
<evidence type="ECO:0000269" key="11">
    <source>
    </source>
</evidence>
<evidence type="ECO:0000303" key="12">
    <source>
    </source>
</evidence>
<evidence type="ECO:0000303" key="13">
    <source>
    </source>
</evidence>
<evidence type="ECO:0000305" key="14"/>
<evidence type="ECO:0007829" key="15">
    <source>
        <dbReference type="PDB" id="2C7S"/>
    </source>
</evidence>
<evidence type="ECO:0007829" key="16">
    <source>
        <dbReference type="PDB" id="8A1F"/>
    </source>
</evidence>
<protein>
    <recommendedName>
        <fullName>Receptor-type tyrosine-protein phosphatase kappa</fullName>
        <shortName>Protein-tyrosine phosphatase kappa</shortName>
        <shortName>R-PTP-kappa</shortName>
        <ecNumber>3.1.3.48</ecNumber>
    </recommendedName>
</protein>
<proteinExistence type="evidence at protein level"/>
<reference key="1">
    <citation type="journal article" date="1996" name="J. Biol. Chem.">
        <title>Association of human protein-tyrosine phosphatase kappa with members of the armadillo family.</title>
        <authorList>
            <person name="Fuchs M."/>
            <person name="Mueller T."/>
            <person name="Lerch M."/>
            <person name="Ullrich A."/>
        </authorList>
    </citation>
    <scope>NUCLEOTIDE SEQUENCE [MRNA] (ISOFORM 1)</scope>
</reference>
<reference key="2">
    <citation type="journal article" date="1997" name="Gene">
        <title>Molecular cloning and chromosomal localization of a human gene homologous to the murine R-PTP-kappa, a receptor-type protein tyrosine phosphatase.</title>
        <authorList>
            <person name="Yang Y."/>
            <person name="Gil M.C."/>
            <person name="Choi E.Y."/>
            <person name="Park S.H."/>
            <person name="Pyun K.H."/>
            <person name="Ha H."/>
        </authorList>
    </citation>
    <scope>NUCLEOTIDE SEQUENCE [MRNA] (ISOFORM 2)</scope>
    <source>
        <tissue>Foreskin</tissue>
    </source>
</reference>
<reference key="3">
    <citation type="journal article" date="2003" name="Nature">
        <title>The DNA sequence and analysis of human chromosome 6.</title>
        <authorList>
            <person name="Mungall A.J."/>
            <person name="Palmer S.A."/>
            <person name="Sims S.K."/>
            <person name="Edwards C.A."/>
            <person name="Ashurst J.L."/>
            <person name="Wilming L."/>
            <person name="Jones M.C."/>
            <person name="Horton R."/>
            <person name="Hunt S.E."/>
            <person name="Scott C.E."/>
            <person name="Gilbert J.G.R."/>
            <person name="Clamp M.E."/>
            <person name="Bethel G."/>
            <person name="Milne S."/>
            <person name="Ainscough R."/>
            <person name="Almeida J.P."/>
            <person name="Ambrose K.D."/>
            <person name="Andrews T.D."/>
            <person name="Ashwell R.I.S."/>
            <person name="Babbage A.K."/>
            <person name="Bagguley C.L."/>
            <person name="Bailey J."/>
            <person name="Banerjee R."/>
            <person name="Barker D.J."/>
            <person name="Barlow K.F."/>
            <person name="Bates K."/>
            <person name="Beare D.M."/>
            <person name="Beasley H."/>
            <person name="Beasley O."/>
            <person name="Bird C.P."/>
            <person name="Blakey S.E."/>
            <person name="Bray-Allen S."/>
            <person name="Brook J."/>
            <person name="Brown A.J."/>
            <person name="Brown J.Y."/>
            <person name="Burford D.C."/>
            <person name="Burrill W."/>
            <person name="Burton J."/>
            <person name="Carder C."/>
            <person name="Carter N.P."/>
            <person name="Chapman J.C."/>
            <person name="Clark S.Y."/>
            <person name="Clark G."/>
            <person name="Clee C.M."/>
            <person name="Clegg S."/>
            <person name="Cobley V."/>
            <person name="Collier R.E."/>
            <person name="Collins J.E."/>
            <person name="Colman L.K."/>
            <person name="Corby N.R."/>
            <person name="Coville G.J."/>
            <person name="Culley K.M."/>
            <person name="Dhami P."/>
            <person name="Davies J."/>
            <person name="Dunn M."/>
            <person name="Earthrowl M.E."/>
            <person name="Ellington A.E."/>
            <person name="Evans K.A."/>
            <person name="Faulkner L."/>
            <person name="Francis M.D."/>
            <person name="Frankish A."/>
            <person name="Frankland J."/>
            <person name="French L."/>
            <person name="Garner P."/>
            <person name="Garnett J."/>
            <person name="Ghori M.J."/>
            <person name="Gilby L.M."/>
            <person name="Gillson C.J."/>
            <person name="Glithero R.J."/>
            <person name="Grafham D.V."/>
            <person name="Grant M."/>
            <person name="Gribble S."/>
            <person name="Griffiths C."/>
            <person name="Griffiths M.N.D."/>
            <person name="Hall R."/>
            <person name="Halls K.S."/>
            <person name="Hammond S."/>
            <person name="Harley J.L."/>
            <person name="Hart E.A."/>
            <person name="Heath P.D."/>
            <person name="Heathcott R."/>
            <person name="Holmes S.J."/>
            <person name="Howden P.J."/>
            <person name="Howe K.L."/>
            <person name="Howell G.R."/>
            <person name="Huckle E."/>
            <person name="Humphray S.J."/>
            <person name="Humphries M.D."/>
            <person name="Hunt A.R."/>
            <person name="Johnson C.M."/>
            <person name="Joy A.A."/>
            <person name="Kay M."/>
            <person name="Keenan S.J."/>
            <person name="Kimberley A.M."/>
            <person name="King A."/>
            <person name="Laird G.K."/>
            <person name="Langford C."/>
            <person name="Lawlor S."/>
            <person name="Leongamornlert D.A."/>
            <person name="Leversha M."/>
            <person name="Lloyd C.R."/>
            <person name="Lloyd D.M."/>
            <person name="Loveland J.E."/>
            <person name="Lovell J."/>
            <person name="Martin S."/>
            <person name="Mashreghi-Mohammadi M."/>
            <person name="Maslen G.L."/>
            <person name="Matthews L."/>
            <person name="McCann O.T."/>
            <person name="McLaren S.J."/>
            <person name="McLay K."/>
            <person name="McMurray A."/>
            <person name="Moore M.J.F."/>
            <person name="Mullikin J.C."/>
            <person name="Niblett D."/>
            <person name="Nickerson T."/>
            <person name="Novik K.L."/>
            <person name="Oliver K."/>
            <person name="Overton-Larty E.K."/>
            <person name="Parker A."/>
            <person name="Patel R."/>
            <person name="Pearce A.V."/>
            <person name="Peck A.I."/>
            <person name="Phillimore B.J.C.T."/>
            <person name="Phillips S."/>
            <person name="Plumb R.W."/>
            <person name="Porter K.M."/>
            <person name="Ramsey Y."/>
            <person name="Ranby S.A."/>
            <person name="Rice C.M."/>
            <person name="Ross M.T."/>
            <person name="Searle S.M."/>
            <person name="Sehra H.K."/>
            <person name="Sheridan E."/>
            <person name="Skuce C.D."/>
            <person name="Smith S."/>
            <person name="Smith M."/>
            <person name="Spraggon L."/>
            <person name="Squares S.L."/>
            <person name="Steward C.A."/>
            <person name="Sycamore N."/>
            <person name="Tamlyn-Hall G."/>
            <person name="Tester J."/>
            <person name="Theaker A.J."/>
            <person name="Thomas D.W."/>
            <person name="Thorpe A."/>
            <person name="Tracey A."/>
            <person name="Tromans A."/>
            <person name="Tubby B."/>
            <person name="Wall M."/>
            <person name="Wallis J.M."/>
            <person name="West A.P."/>
            <person name="White S.S."/>
            <person name="Whitehead S.L."/>
            <person name="Whittaker H."/>
            <person name="Wild A."/>
            <person name="Willey D.J."/>
            <person name="Wilmer T.E."/>
            <person name="Wood J.M."/>
            <person name="Wray P.W."/>
            <person name="Wyatt J.C."/>
            <person name="Young L."/>
            <person name="Younger R.M."/>
            <person name="Bentley D.R."/>
            <person name="Coulson A."/>
            <person name="Durbin R.M."/>
            <person name="Hubbard T."/>
            <person name="Sulston J.E."/>
            <person name="Dunham I."/>
            <person name="Rogers J."/>
            <person name="Beck S."/>
        </authorList>
    </citation>
    <scope>NUCLEOTIDE SEQUENCE [LARGE SCALE GENOMIC DNA]</scope>
</reference>
<reference key="4">
    <citation type="submission" date="2005-09" db="EMBL/GenBank/DDBJ databases">
        <authorList>
            <person name="Mural R.J."/>
            <person name="Istrail S."/>
            <person name="Sutton G.G."/>
            <person name="Florea L."/>
            <person name="Halpern A.L."/>
            <person name="Mobarry C.M."/>
            <person name="Lippert R."/>
            <person name="Walenz B."/>
            <person name="Shatkay H."/>
            <person name="Dew I."/>
            <person name="Miller J.R."/>
            <person name="Flanigan M.J."/>
            <person name="Edwards N.J."/>
            <person name="Bolanos R."/>
            <person name="Fasulo D."/>
            <person name="Halldorsson B.V."/>
            <person name="Hannenhalli S."/>
            <person name="Turner R."/>
            <person name="Yooseph S."/>
            <person name="Lu F."/>
            <person name="Nusskern D.R."/>
            <person name="Shue B.C."/>
            <person name="Zheng X.H."/>
            <person name="Zhong F."/>
            <person name="Delcher A.L."/>
            <person name="Huson D.H."/>
            <person name="Kravitz S.A."/>
            <person name="Mouchard L."/>
            <person name="Reinert K."/>
            <person name="Remington K.A."/>
            <person name="Clark A.G."/>
            <person name="Waterman M.S."/>
            <person name="Eichler E.E."/>
            <person name="Adams M.D."/>
            <person name="Hunkapiller M.W."/>
            <person name="Myers E.W."/>
            <person name="Venter J.C."/>
        </authorList>
    </citation>
    <scope>NUCLEOTIDE SEQUENCE [LARGE SCALE GENOMIC DNA]</scope>
</reference>
<reference key="5">
    <citation type="journal article" date="2004" name="Genome Res.">
        <title>The status, quality, and expansion of the NIH full-length cDNA project: the Mammalian Gene Collection (MGC).</title>
        <authorList>
            <consortium name="The MGC Project Team"/>
        </authorList>
    </citation>
    <scope>NUCLEOTIDE SEQUENCE [LARGE SCALE MRNA] (ISOFORMS 3 AND 4)</scope>
    <source>
        <tissue>Brain</tissue>
    </source>
</reference>
<reference key="6">
    <citation type="journal article" date="2009" name="Curr. Biol.">
        <title>An unbiased screen identifies DEP-1 tumor suppressor as a phosphatase controlling EGFR endocytosis.</title>
        <authorList>
            <person name="Tarcic G."/>
            <person name="Boguslavsky S.K."/>
            <person name="Wakim J."/>
            <person name="Kiuchi T."/>
            <person name="Liu A."/>
            <person name="Reinitz F."/>
            <person name="Nathanson D."/>
            <person name="Takahashi T."/>
            <person name="Mischel P.S."/>
            <person name="Ng T."/>
            <person name="Yarden Y."/>
        </authorList>
    </citation>
    <scope>FUNCTION IN EGFR REGULATION</scope>
</reference>
<reference key="7">
    <citation type="journal article" date="2009" name="J. Proteome Res.">
        <title>Glycoproteomics analysis of human liver tissue by combination of multiple enzyme digestion and hydrazide chemistry.</title>
        <authorList>
            <person name="Chen R."/>
            <person name="Jiang X."/>
            <person name="Sun D."/>
            <person name="Han G."/>
            <person name="Wang F."/>
            <person name="Ye M."/>
            <person name="Wang L."/>
            <person name="Zou H."/>
        </authorList>
    </citation>
    <scope>GLYCOSYLATION [LARGE SCALE ANALYSIS] AT ASN-416</scope>
    <source>
        <tissue>Liver</tissue>
    </source>
</reference>
<reference key="8">
    <citation type="journal article" date="2009" name="Nat. Biotechnol.">
        <title>Mass-spectrometric identification and relative quantification of N-linked cell surface glycoproteins.</title>
        <authorList>
            <person name="Wollscheid B."/>
            <person name="Bausch-Fluck D."/>
            <person name="Henderson C."/>
            <person name="O'Brien R."/>
            <person name="Bibel M."/>
            <person name="Schiess R."/>
            <person name="Aebersold R."/>
            <person name="Watts J.D."/>
        </authorList>
    </citation>
    <scope>GLYCOSYLATION [LARGE SCALE ANALYSIS] AT ASN-416</scope>
    <source>
        <tissue>Leukemic T-cell</tissue>
    </source>
</reference>
<reference key="9">
    <citation type="journal article" date="2014" name="J. Proteomics">
        <title>An enzyme assisted RP-RPLC approach for in-depth analysis of human liver phosphoproteome.</title>
        <authorList>
            <person name="Bian Y."/>
            <person name="Song C."/>
            <person name="Cheng K."/>
            <person name="Dong M."/>
            <person name="Wang F."/>
            <person name="Huang J."/>
            <person name="Sun D."/>
            <person name="Wang L."/>
            <person name="Ye M."/>
            <person name="Zou H."/>
        </authorList>
    </citation>
    <scope>IDENTIFICATION BY MASS SPECTROMETRY [LARGE SCALE ANALYSIS]</scope>
    <source>
        <tissue>Liver</tissue>
    </source>
</reference>
<reference key="10">
    <citation type="journal article" date="2009" name="Cell">
        <title>Large-scale structural analysis of the classical human protein tyrosine phosphatome.</title>
        <authorList>
            <person name="Barr A.J."/>
            <person name="Ugochukwu E."/>
            <person name="Lee W.H."/>
            <person name="King O.N.F."/>
            <person name="Filippakopoulos P."/>
            <person name="Alfano I."/>
            <person name="Savitsky P."/>
            <person name="Burgess-Brown N.A."/>
            <person name="Mueller S."/>
            <person name="Knapp S."/>
        </authorList>
    </citation>
    <scope>X-RAY CRYSTALLOGRAPHY (1.95 ANGSTROMS) OF 865-1154</scope>
</reference>
<sequence>MDTTAAAALPAFVALLLLSPWPLLGSAQGQFSAGGCTFDDGPGACDYHQDLYDDFEWVHVSAQEPHYLPPEMPQGSYMIVDSSDHDPGEKARLQLPTMKENDTHCIDFSYLLYSQKGLNPGTLNILVRVNKGPLANPIWNVTGFTGRDWLRAELAVSTFWPNEYQVIFEAEVSGGRSGYIAIDDIQVLSYPCDKSPHFLRLGDVEVNAGQNATFQCIATGRDAVHNKLWLQRRNGEDIPVAQTKNINHRRFAASFRLQEVTKTDQDLYRCVTQSERGSGVSNFAQLIVREPPRPIAPPQLLGVGPTYLLIQLNANSIIGDGPIILKEVEYRMTSGSWTETHAVNAPTYKLWHLDPDTEYEIRVLLTRPGEGGTGLPGPPLITRTKCAEPMRTPKTLKIAEIQARRIAVDWESLGYNITRCHTFNVTICYHYFRGHNESKADCLDMDPKAPQHVVNHLPPYTNVSLKMILTNPEGRKESEETIIQTDEDVPGPVPVKSLQGTSFENKIFLNWKEPLDPNGIITQYEISYSSIRSFDPAVPVAGPPQTVSNLWNSTHHVFMHLHPGTTYQFFIRASTVKGFGPATAINVTTNISAPTLPDYEGVDASLNETATTITVLLRPAQAKGAPISAYQIVVEELHPHRTKREAGAMECYQVPVTYQNAMSGGAPYYFAAELPPGNLPEPAPFTVGDNRTYQGFWNPPLAPRKGYNIYFQAMSSVEKETKTQCVRIATKAATEEPEVIPDPAKQTDRVVKIAGISAGILVFILLLLVVILIVKKSKLAKKRKDAMGNTRQEMTHMVNAMDRSYADQSTLHAEDPLSITFMDQHNFSPRYENHSATAESSRLLDVPRYLCEGTESPYQTGQLHPAIRVADLLQHINLMKTSDSYGFKEEYESFFEGQSASWDVAKKDQNRAKNRYGNIIAYDHSRVILQPVEDDPSSDYINANYIDGYQRPSHYIATQGPVHETVYDFWRMIWQEQSACIVMVTNLVEVGRVKCYKYWPDDTEVYGDFKVTCVEMEPLAEYVVRTFTLERRGYNEIREVKQFHFTGWPDHGVPYHATGLLSFIRRVKLSNPPSAGPIVVHCSAGAGRTGCYIVIDIMLDMAEREGVVDIYNCVKALRSRRINMVQTEEQYIFIHDAILEACLCGETAIPVCEFKAAYFDMIRIDSQTNSSHLKDEFQTLNSVTPRLQAEDCSIACLPRNHDKNRFMDMLPPDRCLPFLITIDGESSNYINAALMDSYRQPAAFIVTQYPLPNTVKDFWRLVYDYGCTSIVMLNEVDLSQGCPQYWPEEGMLRYGPIQVECMSCSMDCDVINRIFRICNLTRPQEGYLMVQQFQYLGWASHREVPGSKRSFLKLILQVEKWQEECEEGEGRTIIHCLNGGGRSGMFCAIGIVVEMVKRQNVVDVFHAVKTLRNSKPNMVEAPEQYRFCYDVALEYLESS</sequence>
<gene>
    <name type="primary">PTPRK</name>
    <name type="synonym">PTPK</name>
</gene>
<dbReference type="EC" id="3.1.3.48"/>
<dbReference type="EMBL" id="Z70660">
    <property type="protein sequence ID" value="CAA94519.1"/>
    <property type="molecule type" value="mRNA"/>
</dbReference>
<dbReference type="EMBL" id="L77886">
    <property type="protein sequence ID" value="AAC37599.1"/>
    <property type="molecule type" value="mRNA"/>
</dbReference>
<dbReference type="EMBL" id="AL035470">
    <property type="status" value="NOT_ANNOTATED_CDS"/>
    <property type="molecule type" value="Genomic_DNA"/>
</dbReference>
<dbReference type="EMBL" id="AL034349">
    <property type="status" value="NOT_ANNOTATED_CDS"/>
    <property type="molecule type" value="Genomic_DNA"/>
</dbReference>
<dbReference type="EMBL" id="AL590006">
    <property type="status" value="NOT_ANNOTATED_CDS"/>
    <property type="molecule type" value="Genomic_DNA"/>
</dbReference>
<dbReference type="EMBL" id="AL451073">
    <property type="status" value="NOT_ANNOTATED_CDS"/>
    <property type="molecule type" value="Genomic_DNA"/>
</dbReference>
<dbReference type="EMBL" id="AL357621">
    <property type="status" value="NOT_ANNOTATED_CDS"/>
    <property type="molecule type" value="Genomic_DNA"/>
</dbReference>
<dbReference type="EMBL" id="AL035465">
    <property type="status" value="NOT_ANNOTATED_CDS"/>
    <property type="molecule type" value="Genomic_DNA"/>
</dbReference>
<dbReference type="EMBL" id="AL035594">
    <property type="status" value="NOT_ANNOTATED_CDS"/>
    <property type="molecule type" value="Genomic_DNA"/>
</dbReference>
<dbReference type="EMBL" id="CH471051">
    <property type="protein sequence ID" value="EAW48086.1"/>
    <property type="molecule type" value="Genomic_DNA"/>
</dbReference>
<dbReference type="EMBL" id="BC140775">
    <property type="protein sequence ID" value="AAI40776.1"/>
    <property type="molecule type" value="mRNA"/>
</dbReference>
<dbReference type="EMBL" id="BC144512">
    <property type="protein sequence ID" value="AAI44513.1"/>
    <property type="molecule type" value="mRNA"/>
</dbReference>
<dbReference type="EMBL" id="BC144513">
    <property type="protein sequence ID" value="AAI44514.1"/>
    <property type="molecule type" value="mRNA"/>
</dbReference>
<dbReference type="CCDS" id="CCDS47473.1">
    <molecule id="Q15262-3"/>
</dbReference>
<dbReference type="CCDS" id="CCDS5137.1">
    <molecule id="Q15262-2"/>
</dbReference>
<dbReference type="CCDS" id="CCDS75517.1">
    <molecule id="Q15262-1"/>
</dbReference>
<dbReference type="CCDS" id="CCDS78179.1">
    <molecule id="Q15262-4"/>
</dbReference>
<dbReference type="PIR" id="JC6312">
    <property type="entry name" value="JC6312"/>
</dbReference>
<dbReference type="RefSeq" id="NP_001129120.1">
    <molecule id="Q15262-3"/>
    <property type="nucleotide sequence ID" value="NM_001135648.3"/>
</dbReference>
<dbReference type="RefSeq" id="NP_001278910.1">
    <molecule id="Q15262-4"/>
    <property type="nucleotide sequence ID" value="NM_001291981.2"/>
</dbReference>
<dbReference type="RefSeq" id="NP_001278913.1">
    <molecule id="Q15262-1"/>
    <property type="nucleotide sequence ID" value="NM_001291984.2"/>
</dbReference>
<dbReference type="RefSeq" id="NP_002835.2">
    <molecule id="Q15262-2"/>
    <property type="nucleotide sequence ID" value="NM_002844.3"/>
</dbReference>
<dbReference type="PDB" id="2C7S">
    <property type="method" value="X-ray"/>
    <property type="resolution" value="1.95 A"/>
    <property type="chains" value="A=865-1154"/>
</dbReference>
<dbReference type="PDB" id="8A1F">
    <property type="method" value="X-ray"/>
    <property type="resolution" value="3.00 A"/>
    <property type="chains" value="A/B=28-385"/>
</dbReference>
<dbReference type="PDBsum" id="2C7S"/>
<dbReference type="PDBsum" id="8A1F"/>
<dbReference type="SASBDB" id="Q15262"/>
<dbReference type="SMR" id="Q15262"/>
<dbReference type="BioGRID" id="111760">
    <property type="interactions" value="181"/>
</dbReference>
<dbReference type="FunCoup" id="Q15262">
    <property type="interactions" value="917"/>
</dbReference>
<dbReference type="IntAct" id="Q15262">
    <property type="interactions" value="141"/>
</dbReference>
<dbReference type="MINT" id="Q15262"/>
<dbReference type="STRING" id="9606.ENSP00000432973"/>
<dbReference type="DEPOD" id="PTPRK"/>
<dbReference type="GlyConnect" id="1709">
    <property type="glycosylation" value="31 N-Linked glycans (6 sites)"/>
</dbReference>
<dbReference type="GlyCosmos" id="Q15262">
    <property type="glycosylation" value="13 sites, 33 glycans"/>
</dbReference>
<dbReference type="GlyGen" id="Q15262">
    <property type="glycosylation" value="13 sites, 58 N-linked glycans (7 sites)"/>
</dbReference>
<dbReference type="iPTMnet" id="Q15262"/>
<dbReference type="PhosphoSitePlus" id="Q15262"/>
<dbReference type="SwissPalm" id="Q15262"/>
<dbReference type="BioMuta" id="PTPRK"/>
<dbReference type="DMDM" id="146345496"/>
<dbReference type="jPOST" id="Q15262"/>
<dbReference type="MassIVE" id="Q15262"/>
<dbReference type="PaxDb" id="9606-ENSP00000357196"/>
<dbReference type="PeptideAtlas" id="Q15262"/>
<dbReference type="ProteomicsDB" id="60503">
    <molecule id="Q15262-1"/>
</dbReference>
<dbReference type="ProteomicsDB" id="60504">
    <molecule id="Q15262-2"/>
</dbReference>
<dbReference type="ProteomicsDB" id="60505">
    <molecule id="Q15262-3"/>
</dbReference>
<dbReference type="ProteomicsDB" id="7258"/>
<dbReference type="Pumba" id="Q15262"/>
<dbReference type="Antibodypedia" id="32782">
    <property type="antibodies" value="54 antibodies from 21 providers"/>
</dbReference>
<dbReference type="DNASU" id="5796"/>
<dbReference type="Ensembl" id="ENST00000368213.9">
    <molecule id="Q15262-3"/>
    <property type="protein sequence ID" value="ENSP00000357196.5"/>
    <property type="gene ID" value="ENSG00000152894.15"/>
</dbReference>
<dbReference type="Ensembl" id="ENST00000368215.7">
    <molecule id="Q15262-1"/>
    <property type="protein sequence ID" value="ENSP00000357198.3"/>
    <property type="gene ID" value="ENSG00000152894.15"/>
</dbReference>
<dbReference type="Ensembl" id="ENST00000368226.9">
    <molecule id="Q15262-2"/>
    <property type="protein sequence ID" value="ENSP00000357209.4"/>
    <property type="gene ID" value="ENSG00000152894.15"/>
</dbReference>
<dbReference type="Ensembl" id="ENST00000532331.5">
    <molecule id="Q15262-4"/>
    <property type="protein sequence ID" value="ENSP00000432973.1"/>
    <property type="gene ID" value="ENSG00000152894.15"/>
</dbReference>
<dbReference type="Ensembl" id="ENST00000618215.3">
    <molecule id="Q15262-3"/>
    <property type="protein sequence ID" value="ENSP00000484742.2"/>
    <property type="gene ID" value="ENSG00000273993.4"/>
</dbReference>
<dbReference type="Ensembl" id="ENST00000618924.4">
    <molecule id="Q15262-2"/>
    <property type="protein sequence ID" value="ENSP00000483766.2"/>
    <property type="gene ID" value="ENSG00000273993.4"/>
</dbReference>
<dbReference type="Ensembl" id="ENST00000619256.4">
    <molecule id="Q15262-4"/>
    <property type="protein sequence ID" value="ENSP00000477791.2"/>
    <property type="gene ID" value="ENSG00000273993.4"/>
</dbReference>
<dbReference type="Ensembl" id="ENST00000628183.2">
    <molecule id="Q15262-1"/>
    <property type="protein sequence ID" value="ENSP00000486442.1"/>
    <property type="gene ID" value="ENSG00000273993.4"/>
</dbReference>
<dbReference type="GeneID" id="5796"/>
<dbReference type="KEGG" id="hsa:5796"/>
<dbReference type="MANE-Select" id="ENST00000368226.9">
    <molecule id="Q15262-2"/>
    <property type="protein sequence ID" value="ENSP00000357209.4"/>
    <property type="RefSeq nucleotide sequence ID" value="NM_002844.4"/>
    <property type="RefSeq protein sequence ID" value="NP_002835.2"/>
</dbReference>
<dbReference type="UCSC" id="uc003qbj.4">
    <molecule id="Q15262-1"/>
    <property type="organism name" value="human"/>
</dbReference>
<dbReference type="AGR" id="HGNC:9674"/>
<dbReference type="CTD" id="5796"/>
<dbReference type="DisGeNET" id="5796"/>
<dbReference type="GeneCards" id="PTPRK"/>
<dbReference type="HGNC" id="HGNC:9674">
    <property type="gene designation" value="PTPRK"/>
</dbReference>
<dbReference type="HPA" id="ENSG00000152894">
    <property type="expression patterns" value="Low tissue specificity"/>
</dbReference>
<dbReference type="MalaCards" id="PTPRK"/>
<dbReference type="MIM" id="602545">
    <property type="type" value="gene"/>
</dbReference>
<dbReference type="neXtProt" id="NX_Q15262"/>
<dbReference type="OpenTargets" id="ENSG00000152894"/>
<dbReference type="PharmGKB" id="PA34019"/>
<dbReference type="VEuPathDB" id="HostDB:ENSG00000152894"/>
<dbReference type="eggNOG" id="KOG4228">
    <property type="taxonomic scope" value="Eukaryota"/>
</dbReference>
<dbReference type="GeneTree" id="ENSGT00940000156249"/>
<dbReference type="InParanoid" id="Q15262"/>
<dbReference type="OMA" id="RIATKXK"/>
<dbReference type="OrthoDB" id="10253954at2759"/>
<dbReference type="PAN-GO" id="Q15262">
    <property type="GO annotations" value="2 GO annotations based on evolutionary models"/>
</dbReference>
<dbReference type="PhylomeDB" id="Q15262"/>
<dbReference type="TreeFam" id="TF312900"/>
<dbReference type="BRENDA" id="3.1.3.48">
    <property type="organism ID" value="2681"/>
</dbReference>
<dbReference type="PathwayCommons" id="Q15262"/>
<dbReference type="Reactome" id="R-HSA-182971">
    <property type="pathway name" value="EGFR downregulation"/>
</dbReference>
<dbReference type="SignaLink" id="Q15262"/>
<dbReference type="SIGNOR" id="Q15262"/>
<dbReference type="BioGRID-ORCS" id="5796">
    <property type="hits" value="12 hits in 1177 CRISPR screens"/>
</dbReference>
<dbReference type="ChiTaRS" id="PTPRK">
    <property type="organism name" value="human"/>
</dbReference>
<dbReference type="EvolutionaryTrace" id="Q15262"/>
<dbReference type="GeneWiki" id="PTPRK"/>
<dbReference type="GenomeRNAi" id="5796"/>
<dbReference type="Pharos" id="Q15262">
    <property type="development level" value="Tbio"/>
</dbReference>
<dbReference type="PRO" id="PR:Q15262"/>
<dbReference type="Proteomes" id="UP000005640">
    <property type="component" value="Chromosome 6"/>
</dbReference>
<dbReference type="RNAct" id="Q15262">
    <property type="molecule type" value="protein"/>
</dbReference>
<dbReference type="Bgee" id="ENSG00000152894">
    <property type="expression patterns" value="Expressed in corpus callosum and 108 other cell types or tissues"/>
</dbReference>
<dbReference type="ExpressionAtlas" id="Q15262">
    <property type="expression patterns" value="baseline and differential"/>
</dbReference>
<dbReference type="GO" id="GO:0005912">
    <property type="term" value="C:adherens junction"/>
    <property type="evidence" value="ECO:0007669"/>
    <property type="project" value="UniProtKB-SubCell"/>
</dbReference>
<dbReference type="GO" id="GO:0030054">
    <property type="term" value="C:cell junction"/>
    <property type="evidence" value="ECO:0000314"/>
    <property type="project" value="HPA"/>
</dbReference>
<dbReference type="GO" id="GO:0009986">
    <property type="term" value="C:cell surface"/>
    <property type="evidence" value="ECO:0000314"/>
    <property type="project" value="UniProtKB"/>
</dbReference>
<dbReference type="GO" id="GO:0005911">
    <property type="term" value="C:cell-cell junction"/>
    <property type="evidence" value="ECO:0000314"/>
    <property type="project" value="UniProtKB"/>
</dbReference>
<dbReference type="GO" id="GO:0043231">
    <property type="term" value="C:intracellular membrane-bounded organelle"/>
    <property type="evidence" value="ECO:0000314"/>
    <property type="project" value="HPA"/>
</dbReference>
<dbReference type="GO" id="GO:0031256">
    <property type="term" value="C:leading edge membrane"/>
    <property type="evidence" value="ECO:0000314"/>
    <property type="project" value="UniProtKB"/>
</dbReference>
<dbReference type="GO" id="GO:0016020">
    <property type="term" value="C:membrane"/>
    <property type="evidence" value="ECO:0000303"/>
    <property type="project" value="UniProtKB"/>
</dbReference>
<dbReference type="GO" id="GO:0005886">
    <property type="term" value="C:plasma membrane"/>
    <property type="evidence" value="ECO:0000314"/>
    <property type="project" value="HPA"/>
</dbReference>
<dbReference type="GO" id="GO:0008013">
    <property type="term" value="F:beta-catenin binding"/>
    <property type="evidence" value="ECO:0000353"/>
    <property type="project" value="UniProtKB"/>
</dbReference>
<dbReference type="GO" id="GO:0045295">
    <property type="term" value="F:gamma-catenin binding"/>
    <property type="evidence" value="ECO:0000353"/>
    <property type="project" value="UniProtKB"/>
</dbReference>
<dbReference type="GO" id="GO:0019901">
    <property type="term" value="F:protein kinase binding"/>
    <property type="evidence" value="ECO:0000353"/>
    <property type="project" value="UniProtKB"/>
</dbReference>
<dbReference type="GO" id="GO:0004725">
    <property type="term" value="F:protein tyrosine phosphatase activity"/>
    <property type="evidence" value="ECO:0000314"/>
    <property type="project" value="UniProtKB"/>
</dbReference>
<dbReference type="GO" id="GO:0005001">
    <property type="term" value="F:transmembrane receptor protein tyrosine phosphatase activity"/>
    <property type="evidence" value="ECO:0000303"/>
    <property type="project" value="UniProtKB"/>
</dbReference>
<dbReference type="GO" id="GO:0007155">
    <property type="term" value="P:cell adhesion"/>
    <property type="evidence" value="ECO:0000315"/>
    <property type="project" value="UniProtKB"/>
</dbReference>
<dbReference type="GO" id="GO:0016477">
    <property type="term" value="P:cell migration"/>
    <property type="evidence" value="ECO:0000315"/>
    <property type="project" value="UniProtKB"/>
</dbReference>
<dbReference type="GO" id="GO:0034614">
    <property type="term" value="P:cellular response to reactive oxygen species"/>
    <property type="evidence" value="ECO:0000314"/>
    <property type="project" value="UniProtKB"/>
</dbReference>
<dbReference type="GO" id="GO:0034644">
    <property type="term" value="P:cellular response to UV"/>
    <property type="evidence" value="ECO:0000314"/>
    <property type="project" value="UniProtKB"/>
</dbReference>
<dbReference type="GO" id="GO:0048041">
    <property type="term" value="P:focal adhesion assembly"/>
    <property type="evidence" value="ECO:0000315"/>
    <property type="project" value="UniProtKB"/>
</dbReference>
<dbReference type="GO" id="GO:0045786">
    <property type="term" value="P:negative regulation of cell cycle"/>
    <property type="evidence" value="ECO:0000314"/>
    <property type="project" value="UniProtKB"/>
</dbReference>
<dbReference type="GO" id="GO:0030336">
    <property type="term" value="P:negative regulation of cell migration"/>
    <property type="evidence" value="ECO:0000314"/>
    <property type="project" value="UniProtKB"/>
</dbReference>
<dbReference type="GO" id="GO:0008285">
    <property type="term" value="P:negative regulation of cell population proliferation"/>
    <property type="evidence" value="ECO:0000314"/>
    <property type="project" value="UniProtKB"/>
</dbReference>
<dbReference type="GO" id="GO:0045892">
    <property type="term" value="P:negative regulation of DNA-templated transcription"/>
    <property type="evidence" value="ECO:0000314"/>
    <property type="project" value="UniProtKB"/>
</dbReference>
<dbReference type="GO" id="GO:0010839">
    <property type="term" value="P:negative regulation of keratinocyte proliferation"/>
    <property type="evidence" value="ECO:0000314"/>
    <property type="project" value="UniProtKB"/>
</dbReference>
<dbReference type="GO" id="GO:0031175">
    <property type="term" value="P:neuron projection development"/>
    <property type="evidence" value="ECO:0000318"/>
    <property type="project" value="GO_Central"/>
</dbReference>
<dbReference type="GO" id="GO:0006470">
    <property type="term" value="P:protein dephosphorylation"/>
    <property type="evidence" value="ECO:0000314"/>
    <property type="project" value="UniProtKB"/>
</dbReference>
<dbReference type="GO" id="GO:0034394">
    <property type="term" value="P:protein localization to cell surface"/>
    <property type="evidence" value="ECO:0000314"/>
    <property type="project" value="UniProtKB"/>
</dbReference>
<dbReference type="GO" id="GO:0007165">
    <property type="term" value="P:signal transduction"/>
    <property type="evidence" value="ECO:0000314"/>
    <property type="project" value="UniProtKB"/>
</dbReference>
<dbReference type="GO" id="GO:0007179">
    <property type="term" value="P:transforming growth factor beta receptor signaling pathway"/>
    <property type="evidence" value="ECO:0000314"/>
    <property type="project" value="UniProtKB"/>
</dbReference>
<dbReference type="CDD" id="cd00063">
    <property type="entry name" value="FN3"/>
    <property type="match status" value="2"/>
</dbReference>
<dbReference type="CDD" id="cd06263">
    <property type="entry name" value="MAM"/>
    <property type="match status" value="1"/>
</dbReference>
<dbReference type="CDD" id="cd14636">
    <property type="entry name" value="R-PTPc-K-2"/>
    <property type="match status" value="1"/>
</dbReference>
<dbReference type="FunFam" id="3.90.190.10:FF:000003">
    <property type="entry name" value="receptor-type tyrosine-protein phosphatase kappa isoform X1"/>
    <property type="match status" value="1"/>
</dbReference>
<dbReference type="FunFam" id="3.90.190.10:FF:000005">
    <property type="entry name" value="receptor-type tyrosine-protein phosphatase kappa isoform X1"/>
    <property type="match status" value="1"/>
</dbReference>
<dbReference type="FunFam" id="2.60.40.10:FF:000019">
    <property type="entry name" value="receptor-type tyrosine-protein phosphatase kappa isoform X2"/>
    <property type="match status" value="1"/>
</dbReference>
<dbReference type="FunFam" id="2.60.120.200:FF:000006">
    <property type="entry name" value="receptor-type tyrosine-protein phosphatase T isoform X1"/>
    <property type="match status" value="1"/>
</dbReference>
<dbReference type="FunFam" id="2.60.40.10:FF:000009">
    <property type="entry name" value="receptor-type tyrosine-protein phosphatase U isoform X1"/>
    <property type="match status" value="1"/>
</dbReference>
<dbReference type="FunFam" id="2.60.40.10:FF:000048">
    <property type="entry name" value="receptor-type tyrosine-protein phosphatase U isoform X1"/>
    <property type="match status" value="1"/>
</dbReference>
<dbReference type="FunFam" id="2.60.40.10:FF:000025">
    <property type="entry name" value="receptor-type tyrosine-protein phosphatase U isoform X2"/>
    <property type="match status" value="1"/>
</dbReference>
<dbReference type="Gene3D" id="2.60.120.200">
    <property type="match status" value="1"/>
</dbReference>
<dbReference type="Gene3D" id="2.60.40.10">
    <property type="entry name" value="Immunoglobulins"/>
    <property type="match status" value="4"/>
</dbReference>
<dbReference type="Gene3D" id="3.90.190.10">
    <property type="entry name" value="Protein tyrosine phosphatase superfamily"/>
    <property type="match status" value="2"/>
</dbReference>
<dbReference type="InterPro" id="IPR013320">
    <property type="entry name" value="ConA-like_dom_sf"/>
</dbReference>
<dbReference type="InterPro" id="IPR003961">
    <property type="entry name" value="FN3_dom"/>
</dbReference>
<dbReference type="InterPro" id="IPR036116">
    <property type="entry name" value="FN3_sf"/>
</dbReference>
<dbReference type="InterPro" id="IPR007110">
    <property type="entry name" value="Ig-like_dom"/>
</dbReference>
<dbReference type="InterPro" id="IPR036179">
    <property type="entry name" value="Ig-like_dom_sf"/>
</dbReference>
<dbReference type="InterPro" id="IPR013783">
    <property type="entry name" value="Ig-like_fold"/>
</dbReference>
<dbReference type="InterPro" id="IPR013098">
    <property type="entry name" value="Ig_I-set"/>
</dbReference>
<dbReference type="InterPro" id="IPR003599">
    <property type="entry name" value="Ig_sub"/>
</dbReference>
<dbReference type="InterPro" id="IPR000998">
    <property type="entry name" value="MAM_dom"/>
</dbReference>
<dbReference type="InterPro" id="IPR029021">
    <property type="entry name" value="Prot-tyrosine_phosphatase-like"/>
</dbReference>
<dbReference type="InterPro" id="IPR050348">
    <property type="entry name" value="Protein-Tyr_Phosphatase"/>
</dbReference>
<dbReference type="InterPro" id="IPR000242">
    <property type="entry name" value="PTP_cat"/>
</dbReference>
<dbReference type="InterPro" id="IPR016130">
    <property type="entry name" value="Tyr_Pase_AS"/>
</dbReference>
<dbReference type="InterPro" id="IPR003595">
    <property type="entry name" value="Tyr_Pase_cat"/>
</dbReference>
<dbReference type="InterPro" id="IPR000387">
    <property type="entry name" value="Tyr_Pase_dom"/>
</dbReference>
<dbReference type="PANTHER" id="PTHR19134">
    <property type="entry name" value="RECEPTOR-TYPE TYROSINE-PROTEIN PHOSPHATASE"/>
    <property type="match status" value="1"/>
</dbReference>
<dbReference type="PANTHER" id="PTHR19134:SF209">
    <property type="entry name" value="RECEPTOR-TYPE TYROSINE-PROTEIN PHOSPHATASE KAPPA"/>
    <property type="match status" value="1"/>
</dbReference>
<dbReference type="Pfam" id="PF00041">
    <property type="entry name" value="fn3"/>
    <property type="match status" value="1"/>
</dbReference>
<dbReference type="Pfam" id="PF23144">
    <property type="entry name" value="Fn3_PTPRU"/>
    <property type="match status" value="1"/>
</dbReference>
<dbReference type="Pfam" id="PF07679">
    <property type="entry name" value="I-set"/>
    <property type="match status" value="1"/>
</dbReference>
<dbReference type="Pfam" id="PF00629">
    <property type="entry name" value="MAM"/>
    <property type="match status" value="1"/>
</dbReference>
<dbReference type="Pfam" id="PF00102">
    <property type="entry name" value="Y_phosphatase"/>
    <property type="match status" value="2"/>
</dbReference>
<dbReference type="PRINTS" id="PR00020">
    <property type="entry name" value="MAMDOMAIN"/>
</dbReference>
<dbReference type="PRINTS" id="PR00700">
    <property type="entry name" value="PRTYPHPHTASE"/>
</dbReference>
<dbReference type="SMART" id="SM00060">
    <property type="entry name" value="FN3"/>
    <property type="match status" value="3"/>
</dbReference>
<dbReference type="SMART" id="SM00409">
    <property type="entry name" value="IG"/>
    <property type="match status" value="1"/>
</dbReference>
<dbReference type="SMART" id="SM00137">
    <property type="entry name" value="MAM"/>
    <property type="match status" value="1"/>
</dbReference>
<dbReference type="SMART" id="SM00194">
    <property type="entry name" value="PTPc"/>
    <property type="match status" value="2"/>
</dbReference>
<dbReference type="SMART" id="SM00404">
    <property type="entry name" value="PTPc_motif"/>
    <property type="match status" value="2"/>
</dbReference>
<dbReference type="SUPFAM" id="SSF52799">
    <property type="entry name" value="(Phosphotyrosine protein) phosphatases II"/>
    <property type="match status" value="2"/>
</dbReference>
<dbReference type="SUPFAM" id="SSF49899">
    <property type="entry name" value="Concanavalin A-like lectins/glucanases"/>
    <property type="match status" value="1"/>
</dbReference>
<dbReference type="SUPFAM" id="SSF49265">
    <property type="entry name" value="Fibronectin type III"/>
    <property type="match status" value="2"/>
</dbReference>
<dbReference type="SUPFAM" id="SSF48726">
    <property type="entry name" value="Immunoglobulin"/>
    <property type="match status" value="1"/>
</dbReference>
<dbReference type="PROSITE" id="PS50853">
    <property type="entry name" value="FN3"/>
    <property type="match status" value="3"/>
</dbReference>
<dbReference type="PROSITE" id="PS50835">
    <property type="entry name" value="IG_LIKE"/>
    <property type="match status" value="1"/>
</dbReference>
<dbReference type="PROSITE" id="PS00740">
    <property type="entry name" value="MAM_1"/>
    <property type="match status" value="1"/>
</dbReference>
<dbReference type="PROSITE" id="PS50060">
    <property type="entry name" value="MAM_2"/>
    <property type="match status" value="1"/>
</dbReference>
<dbReference type="PROSITE" id="PS00383">
    <property type="entry name" value="TYR_PHOSPHATASE_1"/>
    <property type="match status" value="2"/>
</dbReference>
<dbReference type="PROSITE" id="PS50056">
    <property type="entry name" value="TYR_PHOSPHATASE_2"/>
    <property type="match status" value="2"/>
</dbReference>
<dbReference type="PROSITE" id="PS50055">
    <property type="entry name" value="TYR_PHOSPHATASE_PTP"/>
    <property type="match status" value="2"/>
</dbReference>
<keyword id="KW-0002">3D-structure</keyword>
<keyword id="KW-0025">Alternative splicing</keyword>
<keyword id="KW-0965">Cell junction</keyword>
<keyword id="KW-1003">Cell membrane</keyword>
<keyword id="KW-1015">Disulfide bond</keyword>
<keyword id="KW-0325">Glycoprotein</keyword>
<keyword id="KW-0378">Hydrolase</keyword>
<keyword id="KW-0393">Immunoglobulin domain</keyword>
<keyword id="KW-0472">Membrane</keyword>
<keyword id="KW-0597">Phosphoprotein</keyword>
<keyword id="KW-0904">Protein phosphatase</keyword>
<keyword id="KW-1267">Proteomics identification</keyword>
<keyword id="KW-0675">Receptor</keyword>
<keyword id="KW-1185">Reference proteome</keyword>
<keyword id="KW-0677">Repeat</keyword>
<keyword id="KW-0732">Signal</keyword>
<keyword id="KW-0812">Transmembrane</keyword>
<keyword id="KW-1133">Transmembrane helix</keyword>
<feature type="signal peptide" evidence="3">
    <location>
        <begin position="1"/>
        <end position="26"/>
    </location>
</feature>
<feature type="chain" id="PRO_0000025446" description="Receptor-type tyrosine-protein phosphatase kappa">
    <location>
        <begin position="27"/>
        <end position="1439"/>
    </location>
</feature>
<feature type="topological domain" description="Extracellular" evidence="3">
    <location>
        <begin position="27"/>
        <end position="752"/>
    </location>
</feature>
<feature type="transmembrane region" description="Helical" evidence="3">
    <location>
        <begin position="753"/>
        <end position="774"/>
    </location>
</feature>
<feature type="topological domain" description="Cytoplasmic" evidence="3">
    <location>
        <begin position="775"/>
        <end position="1439"/>
    </location>
</feature>
<feature type="domain" description="MAM" evidence="5">
    <location>
        <begin position="31"/>
        <end position="194"/>
    </location>
</feature>
<feature type="domain" description="Ig-like C2-type">
    <location>
        <begin position="196"/>
        <end position="281"/>
    </location>
</feature>
<feature type="domain" description="Fibronectin type-III 1" evidence="7">
    <location>
        <begin position="294"/>
        <end position="389"/>
    </location>
</feature>
<feature type="domain" description="Fibronectin type-III 2" evidence="7">
    <location>
        <begin position="392"/>
        <end position="488"/>
    </location>
</feature>
<feature type="domain" description="Fibronectin type-III 3" evidence="7">
    <location>
        <begin position="491"/>
        <end position="595"/>
    </location>
</feature>
<feature type="domain" description="Fibronectin type-III 4" evidence="7">
    <location>
        <begin position="597"/>
        <end position="680"/>
    </location>
</feature>
<feature type="domain" description="Tyrosine-protein phosphatase 1" evidence="6">
    <location>
        <begin position="887"/>
        <end position="1141"/>
    </location>
</feature>
<feature type="domain" description="Tyrosine-protein phosphatase 2" evidence="6">
    <location>
        <begin position="1173"/>
        <end position="1435"/>
    </location>
</feature>
<feature type="active site" description="Phosphocysteine intermediate" evidence="1">
    <location>
        <position position="1082"/>
    </location>
</feature>
<feature type="active site" description="Phosphocysteine intermediate" evidence="1">
    <location>
        <position position="1376"/>
    </location>
</feature>
<feature type="binding site" evidence="1">
    <location>
        <position position="1050"/>
    </location>
    <ligand>
        <name>substrate</name>
    </ligand>
</feature>
<feature type="binding site" evidence="1">
    <location>
        <begin position="1082"/>
        <end position="1088"/>
    </location>
    <ligand>
        <name>substrate</name>
    </ligand>
</feature>
<feature type="binding site" evidence="1">
    <location>
        <position position="1126"/>
    </location>
    <ligand>
        <name>substrate</name>
    </ligand>
</feature>
<feature type="site" description="Cleavage" evidence="14">
    <location>
        <begin position="643"/>
        <end position="644"/>
    </location>
</feature>
<feature type="modified residue" description="Phosphoserine" evidence="2">
    <location>
        <position position="856"/>
    </location>
</feature>
<feature type="glycosylation site" description="N-linked (GlcNAc...) asparagine" evidence="3">
    <location>
        <position position="101"/>
    </location>
</feature>
<feature type="glycosylation site" description="N-linked (GlcNAc...) asparagine" evidence="3">
    <location>
        <position position="140"/>
    </location>
</feature>
<feature type="glycosylation site" description="N-linked (GlcNAc...) asparagine" evidence="3">
    <location>
        <position position="211"/>
    </location>
</feature>
<feature type="glycosylation site" description="N-linked (GlcNAc...) asparagine" evidence="9 10">
    <location>
        <position position="416"/>
    </location>
</feature>
<feature type="glycosylation site" description="N-linked (GlcNAc...) asparagine" evidence="3">
    <location>
        <position position="424"/>
    </location>
</feature>
<feature type="glycosylation site" description="N-linked (GlcNAc...) asparagine" evidence="3">
    <location>
        <position position="436"/>
    </location>
</feature>
<feature type="glycosylation site" description="N-linked (GlcNAc...) asparagine" evidence="3">
    <location>
        <position position="462"/>
    </location>
</feature>
<feature type="glycosylation site" description="N-linked (GlcNAc...) asparagine" evidence="3">
    <location>
        <position position="552"/>
    </location>
</feature>
<feature type="glycosylation site" description="N-linked (GlcNAc...) asparagine" evidence="3">
    <location>
        <position position="586"/>
    </location>
</feature>
<feature type="glycosylation site" description="N-linked (GlcNAc...) asparagine" evidence="3">
    <location>
        <position position="590"/>
    </location>
</feature>
<feature type="glycosylation site" description="N-linked (GlcNAc...) asparagine" evidence="3">
    <location>
        <position position="607"/>
    </location>
</feature>
<feature type="glycosylation site" description="N-linked (GlcNAc...) asparagine" evidence="3">
    <location>
        <position position="690"/>
    </location>
</feature>
<feature type="disulfide bond" evidence="4">
    <location>
        <begin position="216"/>
        <end position="270"/>
    </location>
</feature>
<feature type="splice variant" id="VSP_024819" description="In isoform 2, isoform 3 and isoform 4." evidence="12 13">
    <original>A</original>
    <variation>AA</variation>
    <location>
        <position position="732"/>
    </location>
</feature>
<feature type="splice variant" id="VSP_054480" description="In isoform 4." evidence="12">
    <original>Y</original>
    <variation>LPNDPLVPTAVLVPITD</variation>
    <location>
        <position position="831"/>
    </location>
</feature>
<feature type="splice variant" id="VSP_042049" description="In isoform 3 and isoform 4." evidence="12">
    <original>I</original>
    <variation>IDIWLYR</variation>
    <location>
        <position position="946"/>
    </location>
</feature>
<feature type="sequence conflict" description="In Ref. 2; AAC37599." evidence="14" ref="2">
    <original>L</original>
    <variation>V</variation>
    <location>
        <position position="9"/>
    </location>
</feature>
<feature type="sequence conflict" description="In Ref. 1; CAA94519." evidence="14" ref="1">
    <original>T</original>
    <variation>S</variation>
    <location>
        <position position="158"/>
    </location>
</feature>
<feature type="sequence conflict" description="In Ref. 2; AAC37599." evidence="14" ref="2">
    <original>A</original>
    <variation>P</variation>
    <location>
        <position position="284"/>
    </location>
</feature>
<feature type="sequence conflict" description="In Ref. 2; AAC37599." evidence="14" ref="2">
    <original>T</original>
    <variation>S</variation>
    <location>
        <position position="422"/>
    </location>
</feature>
<feature type="sequence conflict" description="In Ref. 2; AAC37599." evidence="14" ref="2">
    <original>AEL</original>
    <variation>CRT</variation>
    <location>
        <begin position="672"/>
        <end position="674"/>
    </location>
</feature>
<feature type="sequence conflict" description="In Ref. 2; AAC37599." evidence="14" ref="2">
    <original>S</original>
    <variation>T</variation>
    <location>
        <position position="715"/>
    </location>
</feature>
<feature type="sequence conflict" description="In Ref. 2; AAC37599." evidence="14" ref="2">
    <original>E</original>
    <variation>K</variation>
    <location>
        <position position="1366"/>
    </location>
</feature>
<feature type="helix" evidence="16">
    <location>
        <begin position="43"/>
        <end position="45"/>
    </location>
</feature>
<feature type="strand" evidence="16">
    <location>
        <begin position="53"/>
        <end position="55"/>
    </location>
</feature>
<feature type="strand" evidence="16">
    <location>
        <begin position="58"/>
        <end position="60"/>
    </location>
</feature>
<feature type="strand" evidence="16">
    <location>
        <begin position="62"/>
        <end position="64"/>
    </location>
</feature>
<feature type="strand" evidence="16">
    <location>
        <begin position="75"/>
        <end position="81"/>
    </location>
</feature>
<feature type="helix" evidence="16">
    <location>
        <begin position="82"/>
        <end position="84"/>
    </location>
</feature>
<feature type="strand" evidence="16">
    <location>
        <begin position="90"/>
        <end position="94"/>
    </location>
</feature>
<feature type="strand" evidence="16">
    <location>
        <begin position="105"/>
        <end position="113"/>
    </location>
</feature>
<feature type="strand" evidence="16">
    <location>
        <begin position="121"/>
        <end position="129"/>
    </location>
</feature>
<feature type="strand" evidence="16">
    <location>
        <begin position="138"/>
        <end position="143"/>
    </location>
</feature>
<feature type="strand" evidence="16">
    <location>
        <begin position="150"/>
        <end position="156"/>
    </location>
</feature>
<feature type="strand" evidence="16">
    <location>
        <begin position="164"/>
        <end position="172"/>
    </location>
</feature>
<feature type="strand" evidence="16">
    <location>
        <begin position="179"/>
        <end position="190"/>
    </location>
</feature>
<feature type="strand" evidence="16">
    <location>
        <begin position="204"/>
        <end position="207"/>
    </location>
</feature>
<feature type="strand" evidence="16">
    <location>
        <begin position="212"/>
        <end position="219"/>
    </location>
</feature>
<feature type="strand" evidence="16">
    <location>
        <begin position="227"/>
        <end position="232"/>
    </location>
</feature>
<feature type="strand" evidence="16">
    <location>
        <begin position="242"/>
        <end position="244"/>
    </location>
</feature>
<feature type="strand" evidence="16">
    <location>
        <begin position="247"/>
        <end position="257"/>
    </location>
</feature>
<feature type="helix" evidence="16">
    <location>
        <begin position="262"/>
        <end position="264"/>
    </location>
</feature>
<feature type="strand" evidence="16">
    <location>
        <begin position="266"/>
        <end position="274"/>
    </location>
</feature>
<feature type="strand" evidence="16">
    <location>
        <begin position="277"/>
        <end position="280"/>
    </location>
</feature>
<feature type="strand" evidence="16">
    <location>
        <begin position="284"/>
        <end position="289"/>
    </location>
</feature>
<feature type="strand" evidence="16">
    <location>
        <begin position="293"/>
        <end position="296"/>
    </location>
</feature>
<feature type="strand" evidence="16">
    <location>
        <begin position="299"/>
        <end position="303"/>
    </location>
</feature>
<feature type="strand" evidence="16">
    <location>
        <begin position="305"/>
        <end position="311"/>
    </location>
</feature>
<feature type="strand" evidence="16">
    <location>
        <begin position="316"/>
        <end position="319"/>
    </location>
</feature>
<feature type="strand" evidence="16">
    <location>
        <begin position="325"/>
        <end position="332"/>
    </location>
</feature>
<feature type="strand" evidence="16">
    <location>
        <begin position="338"/>
        <end position="342"/>
    </location>
</feature>
<feature type="strand" evidence="16">
    <location>
        <begin position="345"/>
        <end position="352"/>
    </location>
</feature>
<feature type="strand" evidence="16">
    <location>
        <begin position="358"/>
        <end position="366"/>
    </location>
</feature>
<feature type="strand" evidence="16">
    <location>
        <begin position="380"/>
        <end position="383"/>
    </location>
</feature>
<feature type="helix" evidence="15">
    <location>
        <begin position="869"/>
        <end position="871"/>
    </location>
</feature>
<feature type="helix" evidence="15">
    <location>
        <begin position="872"/>
        <end position="879"/>
    </location>
</feature>
<feature type="strand" evidence="15">
    <location>
        <begin position="883"/>
        <end position="885"/>
    </location>
</feature>
<feature type="helix" evidence="15">
    <location>
        <begin position="887"/>
        <end position="892"/>
    </location>
</feature>
<feature type="helix" evidence="15">
    <location>
        <begin position="903"/>
        <end position="906"/>
    </location>
</feature>
<feature type="helix" evidence="15">
    <location>
        <begin position="908"/>
        <end position="913"/>
    </location>
</feature>
<feature type="helix" evidence="15">
    <location>
        <begin position="923"/>
        <end position="925"/>
    </location>
</feature>
<feature type="helix" evidence="15">
    <location>
        <begin position="936"/>
        <end position="939"/>
    </location>
</feature>
<feature type="strand" evidence="15">
    <location>
        <begin position="942"/>
        <end position="948"/>
    </location>
</feature>
<feature type="strand" evidence="15">
    <location>
        <begin position="951"/>
        <end position="958"/>
    </location>
</feature>
<feature type="helix" evidence="15">
    <location>
        <begin position="963"/>
        <end position="965"/>
    </location>
</feature>
<feature type="helix" evidence="15">
    <location>
        <begin position="966"/>
        <end position="976"/>
    </location>
</feature>
<feature type="strand" evidence="15">
    <location>
        <begin position="980"/>
        <end position="983"/>
    </location>
</feature>
<feature type="strand" evidence="15">
    <location>
        <begin position="987"/>
        <end position="989"/>
    </location>
</feature>
<feature type="strand" evidence="15">
    <location>
        <begin position="1001"/>
        <end position="1006"/>
    </location>
</feature>
<feature type="strand" evidence="15">
    <location>
        <begin position="1009"/>
        <end position="1018"/>
    </location>
</feature>
<feature type="strand" evidence="15">
    <location>
        <begin position="1020"/>
        <end position="1031"/>
    </location>
</feature>
<feature type="strand" evidence="15">
    <location>
        <begin position="1038"/>
        <end position="1045"/>
    </location>
</feature>
<feature type="strand" evidence="15">
    <location>
        <begin position="1050"/>
        <end position="1053"/>
    </location>
</feature>
<feature type="helix" evidence="15">
    <location>
        <begin position="1058"/>
        <end position="1070"/>
    </location>
</feature>
<feature type="strand" evidence="15">
    <location>
        <begin position="1078"/>
        <end position="1081"/>
    </location>
</feature>
<feature type="strand" evidence="15">
    <location>
        <begin position="1083"/>
        <end position="1086"/>
    </location>
</feature>
<feature type="helix" evidence="15">
    <location>
        <begin position="1087"/>
        <end position="1105"/>
    </location>
</feature>
<feature type="strand" evidence="15">
    <location>
        <begin position="1106"/>
        <end position="1108"/>
    </location>
</feature>
<feature type="helix" evidence="15">
    <location>
        <begin position="1110"/>
        <end position="1120"/>
    </location>
</feature>
<feature type="helix" evidence="15">
    <location>
        <begin position="1128"/>
        <end position="1144"/>
    </location>
</feature>
<feature type="turn" evidence="15">
    <location>
        <begin position="1150"/>
        <end position="1153"/>
    </location>
</feature>
<name>PTPRK_HUMAN</name>
<accession>Q15262</accession>
<accession>B2RTQ8</accession>
<accession>B7ZMG0</accession>
<accession>Q14763</accession>
<accession>Q5TG10</accession>
<accession>Q5TG11</accession>
<organism>
    <name type="scientific">Homo sapiens</name>
    <name type="common">Human</name>
    <dbReference type="NCBI Taxonomy" id="9606"/>
    <lineage>
        <taxon>Eukaryota</taxon>
        <taxon>Metazoa</taxon>
        <taxon>Chordata</taxon>
        <taxon>Craniata</taxon>
        <taxon>Vertebrata</taxon>
        <taxon>Euteleostomi</taxon>
        <taxon>Mammalia</taxon>
        <taxon>Eutheria</taxon>
        <taxon>Euarchontoglires</taxon>
        <taxon>Primates</taxon>
        <taxon>Haplorrhini</taxon>
        <taxon>Catarrhini</taxon>
        <taxon>Hominidae</taxon>
        <taxon>Homo</taxon>
    </lineage>
</organism>
<comment type="function">
    <text evidence="11">Regulation of processes involving cell contact and adhesion such as growth control, tumor invasion, and metastasis. Negative regulator of EGFR signaling pathway. Forms complexes with beta-catenin and gamma-catenin/plakoglobin. Beta-catenin may be a substrate for the catalytic activity of PTPRK/PTP-kappa.</text>
</comment>
<comment type="catalytic activity">
    <reaction evidence="8">
        <text>O-phospho-L-tyrosyl-[protein] + H2O = L-tyrosyl-[protein] + phosphate</text>
        <dbReference type="Rhea" id="RHEA:10684"/>
        <dbReference type="Rhea" id="RHEA-COMP:10136"/>
        <dbReference type="Rhea" id="RHEA-COMP:20101"/>
        <dbReference type="ChEBI" id="CHEBI:15377"/>
        <dbReference type="ChEBI" id="CHEBI:43474"/>
        <dbReference type="ChEBI" id="CHEBI:46858"/>
        <dbReference type="ChEBI" id="CHEBI:61978"/>
        <dbReference type="EC" id="3.1.3.48"/>
    </reaction>
</comment>
<comment type="interaction">
    <interactant intactId="EBI-474052">
        <id>Q15262</id>
    </interactant>
    <interactant intactId="EBI-641062">
        <id>P04626</id>
        <label>ERBB2</label>
    </interactant>
    <organismsDiffer>false</organismsDiffer>
    <experiments>2</experiments>
</comment>
<comment type="interaction">
    <interactant intactId="EBI-474052">
        <id>Q15262</id>
    </interactant>
    <interactant intactId="EBI-475899">
        <id>P06213</id>
        <label>INSR</label>
    </interactant>
    <organismsDiffer>false</organismsDiffer>
    <experiments>2</experiments>
</comment>
<comment type="interaction">
    <interactant intactId="EBI-474052">
        <id>Q15262</id>
    </interactant>
    <interactant intactId="EBI-3893481">
        <id>P28300</id>
        <label>LOX</label>
    </interactant>
    <organismsDiffer>false</organismsDiffer>
    <experiments>4</experiments>
</comment>
<comment type="interaction">
    <interactant intactId="EBI-474052">
        <id>Q15262</id>
    </interactant>
    <interactant intactId="EBI-2257090">
        <id>Q02763</id>
        <label>TEK</label>
    </interactant>
    <organismsDiffer>false</organismsDiffer>
    <experiments>2</experiments>
</comment>
<comment type="subcellular location">
    <subcellularLocation>
        <location>Cell junction</location>
        <location>Adherens junction</location>
    </subcellularLocation>
    <subcellularLocation>
        <location>Cell membrane</location>
        <topology>Single-pass type I membrane protein</topology>
    </subcellularLocation>
</comment>
<comment type="alternative products">
    <event type="alternative splicing"/>
    <isoform>
        <id>Q15262-1</id>
        <name>1</name>
        <sequence type="displayed"/>
    </isoform>
    <isoform>
        <id>Q15262-2</id>
        <name>2</name>
        <sequence type="described" ref="VSP_024819"/>
    </isoform>
    <isoform>
        <id>Q15262-3</id>
        <name>3</name>
        <sequence type="described" ref="VSP_024819 VSP_042049"/>
    </isoform>
    <isoform>
        <id>Q15262-4</id>
        <name>4</name>
        <sequence type="described" ref="VSP_024819 VSP_054480 VSP_042049"/>
    </isoform>
</comment>
<comment type="tissue specificity">
    <text>High levels in lung, brain and colon; less in liver, pancreas, stomach, kidney, placenta and mammary carcinoma.</text>
</comment>
<comment type="PTM">
    <text>This protein undergoes proteolytic processing.</text>
</comment>
<comment type="similarity">
    <text evidence="14">Belongs to the protein-tyrosine phosphatase family. Receptor class 2B subfamily.</text>
</comment>